<evidence type="ECO:0000255" key="1">
    <source>
        <dbReference type="HAMAP-Rule" id="MF_00003"/>
    </source>
</evidence>
<feature type="chain" id="PRO_1000000182" description="Ribosome-binding factor A">
    <location>
        <begin position="1"/>
        <end position="133"/>
    </location>
</feature>
<comment type="function">
    <text evidence="1">One of several proteins that assist in the late maturation steps of the functional core of the 30S ribosomal subunit. Associates with free 30S ribosomal subunits (but not with 30S subunits that are part of 70S ribosomes or polysomes). Required for efficient processing of 16S rRNA. May interact with the 5'-terminal helix region of 16S rRNA.</text>
</comment>
<comment type="subunit">
    <text evidence="1">Monomer. Binds 30S ribosomal subunits, but not 50S ribosomal subunits or 70S ribosomes.</text>
</comment>
<comment type="subcellular location">
    <subcellularLocation>
        <location evidence="1">Cytoplasm</location>
    </subcellularLocation>
</comment>
<comment type="similarity">
    <text evidence="1">Belongs to the RbfA family.</text>
</comment>
<protein>
    <recommendedName>
        <fullName evidence="1">Ribosome-binding factor A</fullName>
    </recommendedName>
</protein>
<accession>A1ST46</accession>
<gene>
    <name evidence="1" type="primary">rbfA</name>
    <name type="ordered locus">Ping_0818</name>
</gene>
<sequence length="133" mass="14740">MAKEYSRTSRVSQQVQKELARILQQEVKDPRIGMVTISGVDVTRDLAYAKVFVTFLTVGDQTNDESLEGLNAAAGYIRRLLGKAMRLRIVPEVRFCFDSTLTEGLRISELVSGAVKADKTKLAASGRTEEDED</sequence>
<organism>
    <name type="scientific">Psychromonas ingrahamii (strain DSM 17664 / CCUG 51855 / 37)</name>
    <dbReference type="NCBI Taxonomy" id="357804"/>
    <lineage>
        <taxon>Bacteria</taxon>
        <taxon>Pseudomonadati</taxon>
        <taxon>Pseudomonadota</taxon>
        <taxon>Gammaproteobacteria</taxon>
        <taxon>Alteromonadales</taxon>
        <taxon>Psychromonadaceae</taxon>
        <taxon>Psychromonas</taxon>
    </lineage>
</organism>
<name>RBFA_PSYIN</name>
<proteinExistence type="inferred from homology"/>
<reference key="1">
    <citation type="journal article" date="2008" name="BMC Genomics">
        <title>Genomics of an extreme psychrophile, Psychromonas ingrahamii.</title>
        <authorList>
            <person name="Riley M."/>
            <person name="Staley J.T."/>
            <person name="Danchin A."/>
            <person name="Wang T.Z."/>
            <person name="Brettin T.S."/>
            <person name="Hauser L.J."/>
            <person name="Land M.L."/>
            <person name="Thompson L.S."/>
        </authorList>
    </citation>
    <scope>NUCLEOTIDE SEQUENCE [LARGE SCALE GENOMIC DNA]</scope>
    <source>
        <strain>DSM 17664 / CCUG 51855 / 37</strain>
    </source>
</reference>
<keyword id="KW-0963">Cytoplasm</keyword>
<keyword id="KW-1185">Reference proteome</keyword>
<keyword id="KW-0690">Ribosome biogenesis</keyword>
<dbReference type="EMBL" id="CP000510">
    <property type="protein sequence ID" value="ABM02661.1"/>
    <property type="molecule type" value="Genomic_DNA"/>
</dbReference>
<dbReference type="RefSeq" id="WP_011769224.1">
    <property type="nucleotide sequence ID" value="NC_008709.1"/>
</dbReference>
<dbReference type="SMR" id="A1ST46"/>
<dbReference type="STRING" id="357804.Ping_0818"/>
<dbReference type="KEGG" id="pin:Ping_0818"/>
<dbReference type="eggNOG" id="COG0858">
    <property type="taxonomic scope" value="Bacteria"/>
</dbReference>
<dbReference type="HOGENOM" id="CLU_089475_5_0_6"/>
<dbReference type="OrthoDB" id="307788at2"/>
<dbReference type="Proteomes" id="UP000000639">
    <property type="component" value="Chromosome"/>
</dbReference>
<dbReference type="GO" id="GO:0005829">
    <property type="term" value="C:cytosol"/>
    <property type="evidence" value="ECO:0007669"/>
    <property type="project" value="TreeGrafter"/>
</dbReference>
<dbReference type="GO" id="GO:0043024">
    <property type="term" value="F:ribosomal small subunit binding"/>
    <property type="evidence" value="ECO:0007669"/>
    <property type="project" value="TreeGrafter"/>
</dbReference>
<dbReference type="GO" id="GO:0030490">
    <property type="term" value="P:maturation of SSU-rRNA"/>
    <property type="evidence" value="ECO:0007669"/>
    <property type="project" value="UniProtKB-UniRule"/>
</dbReference>
<dbReference type="Gene3D" id="3.30.300.20">
    <property type="match status" value="1"/>
</dbReference>
<dbReference type="HAMAP" id="MF_00003">
    <property type="entry name" value="RbfA"/>
    <property type="match status" value="1"/>
</dbReference>
<dbReference type="InterPro" id="IPR015946">
    <property type="entry name" value="KH_dom-like_a/b"/>
</dbReference>
<dbReference type="InterPro" id="IPR000238">
    <property type="entry name" value="RbfA"/>
</dbReference>
<dbReference type="InterPro" id="IPR023799">
    <property type="entry name" value="RbfA_dom_sf"/>
</dbReference>
<dbReference type="InterPro" id="IPR020053">
    <property type="entry name" value="Ribosome-bd_factorA_CS"/>
</dbReference>
<dbReference type="NCBIfam" id="TIGR00082">
    <property type="entry name" value="rbfA"/>
    <property type="match status" value="1"/>
</dbReference>
<dbReference type="PANTHER" id="PTHR33515">
    <property type="entry name" value="RIBOSOME-BINDING FACTOR A, CHLOROPLASTIC-RELATED"/>
    <property type="match status" value="1"/>
</dbReference>
<dbReference type="PANTHER" id="PTHR33515:SF1">
    <property type="entry name" value="RIBOSOME-BINDING FACTOR A, CHLOROPLASTIC-RELATED"/>
    <property type="match status" value="1"/>
</dbReference>
<dbReference type="Pfam" id="PF02033">
    <property type="entry name" value="RBFA"/>
    <property type="match status" value="1"/>
</dbReference>
<dbReference type="SUPFAM" id="SSF89919">
    <property type="entry name" value="Ribosome-binding factor A, RbfA"/>
    <property type="match status" value="1"/>
</dbReference>
<dbReference type="PROSITE" id="PS01319">
    <property type="entry name" value="RBFA"/>
    <property type="match status" value="1"/>
</dbReference>